<name>ARGP_VIBVY</name>
<comment type="function">
    <text evidence="1">Controls the transcription of genes involved in arginine and lysine metabolism.</text>
</comment>
<comment type="subunit">
    <text evidence="1">Homodimer.</text>
</comment>
<comment type="similarity">
    <text evidence="2">Belongs to the LysR transcriptional regulatory family.</text>
</comment>
<comment type="sequence caution" evidence="2">
    <conflict type="erroneous initiation">
        <sequence resource="EMBL-CDS" id="BAC95618"/>
    </conflict>
</comment>
<reference key="1">
    <citation type="journal article" date="2003" name="Genome Res.">
        <title>Comparative genome analysis of Vibrio vulnificus, a marine pathogen.</title>
        <authorList>
            <person name="Chen C.-Y."/>
            <person name="Wu K.-M."/>
            <person name="Chang Y.-C."/>
            <person name="Chang C.-H."/>
            <person name="Tsai H.-C."/>
            <person name="Liao T.-L."/>
            <person name="Liu Y.-M."/>
            <person name="Chen H.-J."/>
            <person name="Shen A.B.-T."/>
            <person name="Li J.-C."/>
            <person name="Su T.-L."/>
            <person name="Shao C.-P."/>
            <person name="Lee C.-T."/>
            <person name="Hor L.-I."/>
            <person name="Tsai S.-F."/>
        </authorList>
    </citation>
    <scope>NUCLEOTIDE SEQUENCE [LARGE SCALE GENOMIC DNA]</scope>
    <source>
        <strain>YJ016</strain>
    </source>
</reference>
<organism>
    <name type="scientific">Vibrio vulnificus (strain YJ016)</name>
    <dbReference type="NCBI Taxonomy" id="196600"/>
    <lineage>
        <taxon>Bacteria</taxon>
        <taxon>Pseudomonadati</taxon>
        <taxon>Pseudomonadota</taxon>
        <taxon>Gammaproteobacteria</taxon>
        <taxon>Vibrionales</taxon>
        <taxon>Vibrionaceae</taxon>
        <taxon>Vibrio</taxon>
    </lineage>
</organism>
<keyword id="KW-0238">DNA-binding</keyword>
<keyword id="KW-0804">Transcription</keyword>
<keyword id="KW-0805">Transcription regulation</keyword>
<protein>
    <recommendedName>
        <fullName evidence="1">HTH-type transcriptional regulator ArgP</fullName>
    </recommendedName>
</protein>
<gene>
    <name evidence="1" type="primary">argP</name>
    <name type="synonym">iciA</name>
    <name type="ordered locus">VV2854</name>
</gene>
<evidence type="ECO:0000255" key="1">
    <source>
        <dbReference type="HAMAP-Rule" id="MF_00513"/>
    </source>
</evidence>
<evidence type="ECO:0000305" key="2"/>
<proteinExistence type="inferred from homology"/>
<sequence length="298" mass="33604">MRGLDYKWIEALDAVVAQGGFERAAEELYISQSAVSQRIKQLERFLAQSVLIREQPPKPTPVGKKLLGLYRRVRILEHELIPELMNDDTAKPIQLALATNADSLATWLLPALKEVMTQRQVELNLAIYGESRSIEKLKSGEVAGAISLESQPIAGCKADYLGRMDYVCVASPDFYQRYFAAGVNYQTLRKAPAVSYDQYDDLHNRFLHDHFNISRDSIINHNVGSSEAFVRLAVSGIAYCLIPKLQIEQELASGVLMDITPGFLLSYRIYWHHWQLESGVLKEISQAIVQYAQAHLPL</sequence>
<dbReference type="EMBL" id="BA000037">
    <property type="protein sequence ID" value="BAC95618.1"/>
    <property type="status" value="ALT_INIT"/>
    <property type="molecule type" value="Genomic_DNA"/>
</dbReference>
<dbReference type="RefSeq" id="WP_043877322.1">
    <property type="nucleotide sequence ID" value="NC_005139.1"/>
</dbReference>
<dbReference type="SMR" id="Q7MHL5"/>
<dbReference type="STRING" id="672.VV93_v1c25610"/>
<dbReference type="KEGG" id="vvy:VV2854"/>
<dbReference type="PATRIC" id="fig|196600.6.peg.2842"/>
<dbReference type="eggNOG" id="COG0583">
    <property type="taxonomic scope" value="Bacteria"/>
</dbReference>
<dbReference type="HOGENOM" id="CLU_063829_0_0_6"/>
<dbReference type="Proteomes" id="UP000002675">
    <property type="component" value="Chromosome I"/>
</dbReference>
<dbReference type="GO" id="GO:0003677">
    <property type="term" value="F:DNA binding"/>
    <property type="evidence" value="ECO:0007669"/>
    <property type="project" value="UniProtKB-UniRule"/>
</dbReference>
<dbReference type="GO" id="GO:0003700">
    <property type="term" value="F:DNA-binding transcription factor activity"/>
    <property type="evidence" value="ECO:0007669"/>
    <property type="project" value="UniProtKB-UniRule"/>
</dbReference>
<dbReference type="CDD" id="cd08428">
    <property type="entry name" value="PBP2_IciA_ArgP"/>
    <property type="match status" value="1"/>
</dbReference>
<dbReference type="FunFam" id="1.10.10.10:FF:000061">
    <property type="entry name" value="HTH-type transcriptional regulator ArgP"/>
    <property type="match status" value="1"/>
</dbReference>
<dbReference type="Gene3D" id="3.40.190.290">
    <property type="match status" value="1"/>
</dbReference>
<dbReference type="Gene3D" id="1.10.10.10">
    <property type="entry name" value="Winged helix-like DNA-binding domain superfamily/Winged helix DNA-binding domain"/>
    <property type="match status" value="1"/>
</dbReference>
<dbReference type="HAMAP" id="MF_00513">
    <property type="entry name" value="HTH_type_ArgP"/>
    <property type="match status" value="1"/>
</dbReference>
<dbReference type="InterPro" id="IPR017685">
    <property type="entry name" value="ArgP"/>
</dbReference>
<dbReference type="InterPro" id="IPR023490">
    <property type="entry name" value="ArgP_gammaproteobact"/>
</dbReference>
<dbReference type="InterPro" id="IPR050176">
    <property type="entry name" value="LTTR"/>
</dbReference>
<dbReference type="InterPro" id="IPR005119">
    <property type="entry name" value="LysR_subst-bd"/>
</dbReference>
<dbReference type="InterPro" id="IPR000847">
    <property type="entry name" value="Tscrpt_reg_HTH_LysR"/>
</dbReference>
<dbReference type="InterPro" id="IPR036388">
    <property type="entry name" value="WH-like_DNA-bd_sf"/>
</dbReference>
<dbReference type="InterPro" id="IPR036390">
    <property type="entry name" value="WH_DNA-bd_sf"/>
</dbReference>
<dbReference type="NCBIfam" id="TIGR03298">
    <property type="entry name" value="argP"/>
    <property type="match status" value="1"/>
</dbReference>
<dbReference type="NCBIfam" id="NF002964">
    <property type="entry name" value="PRK03635.1"/>
    <property type="match status" value="1"/>
</dbReference>
<dbReference type="NCBIfam" id="NF009888">
    <property type="entry name" value="PRK13348.1"/>
    <property type="match status" value="1"/>
</dbReference>
<dbReference type="PANTHER" id="PTHR30579:SF2">
    <property type="entry name" value="HTH-TYPE TRANSCRIPTIONAL REGULATOR ARGP"/>
    <property type="match status" value="1"/>
</dbReference>
<dbReference type="PANTHER" id="PTHR30579">
    <property type="entry name" value="TRANSCRIPTIONAL REGULATOR"/>
    <property type="match status" value="1"/>
</dbReference>
<dbReference type="Pfam" id="PF00126">
    <property type="entry name" value="HTH_1"/>
    <property type="match status" value="1"/>
</dbReference>
<dbReference type="Pfam" id="PF03466">
    <property type="entry name" value="LysR_substrate"/>
    <property type="match status" value="1"/>
</dbReference>
<dbReference type="PRINTS" id="PR00039">
    <property type="entry name" value="HTHLYSR"/>
</dbReference>
<dbReference type="SUPFAM" id="SSF53850">
    <property type="entry name" value="Periplasmic binding protein-like II"/>
    <property type="match status" value="1"/>
</dbReference>
<dbReference type="SUPFAM" id="SSF46785">
    <property type="entry name" value="Winged helix' DNA-binding domain"/>
    <property type="match status" value="1"/>
</dbReference>
<dbReference type="PROSITE" id="PS50931">
    <property type="entry name" value="HTH_LYSR"/>
    <property type="match status" value="1"/>
</dbReference>
<accession>Q7MHL5</accession>
<feature type="chain" id="PRO_0000105652" description="HTH-type transcriptional regulator ArgP">
    <location>
        <begin position="1"/>
        <end position="298"/>
    </location>
</feature>
<feature type="domain" description="HTH lysR-type" evidence="1">
    <location>
        <begin position="4"/>
        <end position="60"/>
    </location>
</feature>
<feature type="DNA-binding region" description="H-T-H motif" evidence="1">
    <location>
        <begin position="21"/>
        <end position="40"/>
    </location>
</feature>